<gene>
    <name evidence="1" type="primary">prfA</name>
    <name type="ordered locus">Dtur_0805</name>
</gene>
<feature type="chain" id="PRO_1000117237" description="Peptide chain release factor 1">
    <location>
        <begin position="1"/>
        <end position="367"/>
    </location>
</feature>
<feature type="modified residue" description="N5-methylglutamine" evidence="1">
    <location>
        <position position="238"/>
    </location>
</feature>
<name>RF1_DICTD</name>
<keyword id="KW-0963">Cytoplasm</keyword>
<keyword id="KW-0488">Methylation</keyword>
<keyword id="KW-0648">Protein biosynthesis</keyword>
<keyword id="KW-1185">Reference proteome</keyword>
<sequence>MLQKLVIDKLEEIEKRFEEIEGLLAKEDVISDFNKYQSLLKERAKIEEIVDKFREYKRLLKEKEDLEEMVKEEQDEDLRSLAETELEDIQEKLEKVEFELKALLLPKDPNDEKNIIMEIRAGTGGEEAALFAADLFRMYLGYAQKKGWKVEIVSSNPTGLGGFKEIIFIVEGKGAYSRLKFESGVHRVQRVPITESSGRIHTSTATVAVLPEMEEIEVEIDPKDLRIETFRSGGAGGQHVNKTESGVRITHIPSGIVVQCQDERSQHQNREKAMKVLRARLYEYYQREKENEIASQRRQQVGTGERSEKIRTYNFPQRRVTDHRINYSSFQLEEVLSGELDEFIDRLILAEKEEQIKKLFEEVGATS</sequence>
<accession>B8E003</accession>
<comment type="function">
    <text evidence="1">Peptide chain release factor 1 directs the termination of translation in response to the peptide chain termination codons UAG and UAA.</text>
</comment>
<comment type="subcellular location">
    <subcellularLocation>
        <location evidence="1">Cytoplasm</location>
    </subcellularLocation>
</comment>
<comment type="PTM">
    <text evidence="1">Methylated by PrmC. Methylation increases the termination efficiency of RF1.</text>
</comment>
<comment type="similarity">
    <text evidence="1">Belongs to the prokaryotic/mitochondrial release factor family.</text>
</comment>
<dbReference type="EMBL" id="CP001251">
    <property type="protein sequence ID" value="ACK42086.1"/>
    <property type="molecule type" value="Genomic_DNA"/>
</dbReference>
<dbReference type="RefSeq" id="WP_012583170.1">
    <property type="nucleotide sequence ID" value="NC_011661.1"/>
</dbReference>
<dbReference type="RefSeq" id="YP_002352700.1">
    <property type="nucleotide sequence ID" value="NC_011661.1"/>
</dbReference>
<dbReference type="SMR" id="B8E003"/>
<dbReference type="FunCoup" id="B8E003">
    <property type="interactions" value="345"/>
</dbReference>
<dbReference type="STRING" id="515635.Dtur_0805"/>
<dbReference type="EnsemblBacteria" id="ACK42086">
    <property type="protein sequence ID" value="ACK42086"/>
    <property type="gene ID" value="Dtur_0805"/>
</dbReference>
<dbReference type="KEGG" id="dtu:Dtur_0805"/>
<dbReference type="PATRIC" id="fig|515635.4.peg.843"/>
<dbReference type="eggNOG" id="COG0216">
    <property type="taxonomic scope" value="Bacteria"/>
</dbReference>
<dbReference type="HOGENOM" id="CLU_036856_0_1_0"/>
<dbReference type="InParanoid" id="B8E003"/>
<dbReference type="OrthoDB" id="9806673at2"/>
<dbReference type="Proteomes" id="UP000007719">
    <property type="component" value="Chromosome"/>
</dbReference>
<dbReference type="GO" id="GO:0005737">
    <property type="term" value="C:cytoplasm"/>
    <property type="evidence" value="ECO:0007669"/>
    <property type="project" value="UniProtKB-SubCell"/>
</dbReference>
<dbReference type="GO" id="GO:0016149">
    <property type="term" value="F:translation release factor activity, codon specific"/>
    <property type="evidence" value="ECO:0007669"/>
    <property type="project" value="UniProtKB-UniRule"/>
</dbReference>
<dbReference type="FunFam" id="3.30.160.20:FF:000004">
    <property type="entry name" value="Peptide chain release factor 1"/>
    <property type="match status" value="1"/>
</dbReference>
<dbReference type="FunFam" id="3.30.70.1660:FF:000002">
    <property type="entry name" value="Peptide chain release factor 1"/>
    <property type="match status" value="1"/>
</dbReference>
<dbReference type="FunFam" id="3.30.70.1660:FF:000004">
    <property type="entry name" value="Peptide chain release factor 1"/>
    <property type="match status" value="1"/>
</dbReference>
<dbReference type="Gene3D" id="3.30.160.20">
    <property type="match status" value="1"/>
</dbReference>
<dbReference type="Gene3D" id="3.30.70.1660">
    <property type="match status" value="1"/>
</dbReference>
<dbReference type="Gene3D" id="6.10.140.1950">
    <property type="match status" value="1"/>
</dbReference>
<dbReference type="HAMAP" id="MF_00093">
    <property type="entry name" value="Rel_fac_1"/>
    <property type="match status" value="1"/>
</dbReference>
<dbReference type="InterPro" id="IPR005139">
    <property type="entry name" value="PCRF"/>
</dbReference>
<dbReference type="InterPro" id="IPR000352">
    <property type="entry name" value="Pep_chain_release_fac_I"/>
</dbReference>
<dbReference type="InterPro" id="IPR045853">
    <property type="entry name" value="Pep_chain_release_fac_I_sf"/>
</dbReference>
<dbReference type="InterPro" id="IPR050057">
    <property type="entry name" value="Prokaryotic/Mito_RF"/>
</dbReference>
<dbReference type="InterPro" id="IPR004373">
    <property type="entry name" value="RF-1"/>
</dbReference>
<dbReference type="NCBIfam" id="TIGR00019">
    <property type="entry name" value="prfA"/>
    <property type="match status" value="1"/>
</dbReference>
<dbReference type="NCBIfam" id="NF001859">
    <property type="entry name" value="PRK00591.1"/>
    <property type="match status" value="1"/>
</dbReference>
<dbReference type="PANTHER" id="PTHR43804">
    <property type="entry name" value="LD18447P"/>
    <property type="match status" value="1"/>
</dbReference>
<dbReference type="PANTHER" id="PTHR43804:SF7">
    <property type="entry name" value="LD18447P"/>
    <property type="match status" value="1"/>
</dbReference>
<dbReference type="Pfam" id="PF03462">
    <property type="entry name" value="PCRF"/>
    <property type="match status" value="1"/>
</dbReference>
<dbReference type="Pfam" id="PF00472">
    <property type="entry name" value="RF-1"/>
    <property type="match status" value="1"/>
</dbReference>
<dbReference type="SMART" id="SM00937">
    <property type="entry name" value="PCRF"/>
    <property type="match status" value="1"/>
</dbReference>
<dbReference type="SUPFAM" id="SSF75620">
    <property type="entry name" value="Release factor"/>
    <property type="match status" value="1"/>
</dbReference>
<dbReference type="PROSITE" id="PS00745">
    <property type="entry name" value="RF_PROK_I"/>
    <property type="match status" value="1"/>
</dbReference>
<reference key="1">
    <citation type="journal article" date="2016" name="Front. Microbiol.">
        <title>The complete genome sequence of hyperthermophile Dictyoglomus turgidum DSM 6724 reveals a specialized carbohydrate fermentor.</title>
        <authorList>
            <person name="Brumm P.J."/>
            <person name="Gowda K."/>
            <person name="Robb F.T."/>
            <person name="Mead D.A."/>
        </authorList>
    </citation>
    <scope>NUCLEOTIDE SEQUENCE [LARGE SCALE GENOMIC DNA]</scope>
    <source>
        <strain>DSM 6724 / Z-1310</strain>
    </source>
</reference>
<evidence type="ECO:0000255" key="1">
    <source>
        <dbReference type="HAMAP-Rule" id="MF_00093"/>
    </source>
</evidence>
<protein>
    <recommendedName>
        <fullName evidence="1">Peptide chain release factor 1</fullName>
        <shortName evidence="1">RF-1</shortName>
    </recommendedName>
</protein>
<organism>
    <name type="scientific">Dictyoglomus turgidum (strain DSM 6724 / Z-1310)</name>
    <dbReference type="NCBI Taxonomy" id="515635"/>
    <lineage>
        <taxon>Bacteria</taxon>
        <taxon>Pseudomonadati</taxon>
        <taxon>Dictyoglomota</taxon>
        <taxon>Dictyoglomia</taxon>
        <taxon>Dictyoglomales</taxon>
        <taxon>Dictyoglomaceae</taxon>
        <taxon>Dictyoglomus</taxon>
    </lineage>
</organism>
<proteinExistence type="inferred from homology"/>